<comment type="function">
    <text evidence="1">Essential cell division protein that stabilizes the FtsZ protofilaments by cross-linking them and that serves as a cytoplasmic membrane anchor for the Z ring. Also required for the recruitment to the septal ring of downstream cell division proteins.</text>
</comment>
<comment type="subunit">
    <text evidence="1">Interacts with FtsZ via their C-terminal domains.</text>
</comment>
<comment type="subcellular location">
    <subcellularLocation>
        <location evidence="1">Cell inner membrane</location>
        <topology evidence="1">Single-pass type I membrane protein</topology>
    </subcellularLocation>
    <text evidence="1">Localizes to the Z ring in an FtsZ-dependent manner.</text>
</comment>
<comment type="similarity">
    <text evidence="1">Belongs to the ZipA family.</text>
</comment>
<dbReference type="EMBL" id="CP000627">
    <property type="protein sequence ID" value="ABQ19674.1"/>
    <property type="molecule type" value="Genomic_DNA"/>
</dbReference>
<dbReference type="EMBL" id="CP001235">
    <property type="protein sequence ID" value="ACP08997.1"/>
    <property type="molecule type" value="Genomic_DNA"/>
</dbReference>
<dbReference type="RefSeq" id="WP_001157059.1">
    <property type="nucleotide sequence ID" value="NZ_JAACZH010000005.1"/>
</dbReference>
<dbReference type="SMR" id="A5F2W2"/>
<dbReference type="KEGG" id="vco:VC0395_A0491"/>
<dbReference type="KEGG" id="vcr:VC395_0985"/>
<dbReference type="PATRIC" id="fig|345073.21.peg.954"/>
<dbReference type="eggNOG" id="COG3115">
    <property type="taxonomic scope" value="Bacteria"/>
</dbReference>
<dbReference type="HOGENOM" id="CLU_030174_1_0_6"/>
<dbReference type="OrthoDB" id="7054914at2"/>
<dbReference type="Proteomes" id="UP000000249">
    <property type="component" value="Chromosome 2"/>
</dbReference>
<dbReference type="GO" id="GO:0032153">
    <property type="term" value="C:cell division site"/>
    <property type="evidence" value="ECO:0007669"/>
    <property type="project" value="UniProtKB-UniRule"/>
</dbReference>
<dbReference type="GO" id="GO:0005886">
    <property type="term" value="C:plasma membrane"/>
    <property type="evidence" value="ECO:0007669"/>
    <property type="project" value="UniProtKB-SubCell"/>
</dbReference>
<dbReference type="GO" id="GO:0000917">
    <property type="term" value="P:division septum assembly"/>
    <property type="evidence" value="ECO:0007669"/>
    <property type="project" value="TreeGrafter"/>
</dbReference>
<dbReference type="GO" id="GO:0043093">
    <property type="term" value="P:FtsZ-dependent cytokinesis"/>
    <property type="evidence" value="ECO:0007669"/>
    <property type="project" value="UniProtKB-UniRule"/>
</dbReference>
<dbReference type="CDD" id="cd00231">
    <property type="entry name" value="ZipA"/>
    <property type="match status" value="1"/>
</dbReference>
<dbReference type="FunFam" id="3.30.1400.10:FF:000001">
    <property type="entry name" value="Cell division protein ZipA"/>
    <property type="match status" value="1"/>
</dbReference>
<dbReference type="Gene3D" id="3.30.1400.10">
    <property type="entry name" value="ZipA, C-terminal FtsZ-binding domain"/>
    <property type="match status" value="1"/>
</dbReference>
<dbReference type="HAMAP" id="MF_00509">
    <property type="entry name" value="ZipA"/>
    <property type="match status" value="1"/>
</dbReference>
<dbReference type="InterPro" id="IPR011919">
    <property type="entry name" value="Cell_div_ZipA"/>
</dbReference>
<dbReference type="InterPro" id="IPR007449">
    <property type="entry name" value="ZipA_FtsZ-bd_C"/>
</dbReference>
<dbReference type="InterPro" id="IPR036765">
    <property type="entry name" value="ZipA_FtsZ-bd_C_sf"/>
</dbReference>
<dbReference type="NCBIfam" id="TIGR02205">
    <property type="entry name" value="septum_zipA"/>
    <property type="match status" value="1"/>
</dbReference>
<dbReference type="PANTHER" id="PTHR38685">
    <property type="entry name" value="CELL DIVISION PROTEIN ZIPA"/>
    <property type="match status" value="1"/>
</dbReference>
<dbReference type="PANTHER" id="PTHR38685:SF1">
    <property type="entry name" value="CELL DIVISION PROTEIN ZIPA"/>
    <property type="match status" value="1"/>
</dbReference>
<dbReference type="Pfam" id="PF04354">
    <property type="entry name" value="ZipA_C"/>
    <property type="match status" value="1"/>
</dbReference>
<dbReference type="SMART" id="SM00771">
    <property type="entry name" value="ZipA_C"/>
    <property type="match status" value="1"/>
</dbReference>
<dbReference type="SUPFAM" id="SSF64383">
    <property type="entry name" value="Cell-division protein ZipA, C-terminal domain"/>
    <property type="match status" value="1"/>
</dbReference>
<evidence type="ECO:0000255" key="1">
    <source>
        <dbReference type="HAMAP-Rule" id="MF_00509"/>
    </source>
</evidence>
<evidence type="ECO:0000256" key="2">
    <source>
        <dbReference type="SAM" id="MobiDB-lite"/>
    </source>
</evidence>
<feature type="chain" id="PRO_1000072470" description="Cell division protein ZipA">
    <location>
        <begin position="1"/>
        <end position="291"/>
    </location>
</feature>
<feature type="topological domain" description="Periplasmic" evidence="1">
    <location>
        <begin position="1"/>
        <end position="5"/>
    </location>
</feature>
<feature type="transmembrane region" description="Helical" evidence="1">
    <location>
        <begin position="6"/>
        <end position="26"/>
    </location>
</feature>
<feature type="topological domain" description="Cytoplasmic" evidence="1">
    <location>
        <begin position="27"/>
        <end position="291"/>
    </location>
</feature>
<feature type="region of interest" description="Disordered" evidence="2">
    <location>
        <begin position="29"/>
        <end position="61"/>
    </location>
</feature>
<feature type="region of interest" description="Disordered" evidence="2">
    <location>
        <begin position="92"/>
        <end position="119"/>
    </location>
</feature>
<feature type="compositionally biased region" description="Basic and acidic residues" evidence="2">
    <location>
        <begin position="29"/>
        <end position="51"/>
    </location>
</feature>
<organism>
    <name type="scientific">Vibrio cholerae serotype O1 (strain ATCC 39541 / Classical Ogawa 395 / O395)</name>
    <dbReference type="NCBI Taxonomy" id="345073"/>
    <lineage>
        <taxon>Bacteria</taxon>
        <taxon>Pseudomonadati</taxon>
        <taxon>Pseudomonadota</taxon>
        <taxon>Gammaproteobacteria</taxon>
        <taxon>Vibrionales</taxon>
        <taxon>Vibrionaceae</taxon>
        <taxon>Vibrio</taxon>
    </lineage>
</organism>
<gene>
    <name evidence="1" type="primary">zipA</name>
    <name type="ordered locus">VC0395_A0491</name>
    <name type="ordered locus">VC395_0985</name>
</gene>
<protein>
    <recommendedName>
        <fullName evidence="1">Cell division protein ZipA</fullName>
    </recommendedName>
</protein>
<reference key="1">
    <citation type="submission" date="2007-03" db="EMBL/GenBank/DDBJ databases">
        <authorList>
            <person name="Heidelberg J."/>
        </authorList>
    </citation>
    <scope>NUCLEOTIDE SEQUENCE [LARGE SCALE GENOMIC DNA]</scope>
    <source>
        <strain>ATCC 39541 / Classical Ogawa 395 / O395</strain>
    </source>
</reference>
<reference key="2">
    <citation type="journal article" date="2008" name="PLoS ONE">
        <title>A recalibrated molecular clock and independent origins for the cholera pandemic clones.</title>
        <authorList>
            <person name="Feng L."/>
            <person name="Reeves P.R."/>
            <person name="Lan R."/>
            <person name="Ren Y."/>
            <person name="Gao C."/>
            <person name="Zhou Z."/>
            <person name="Ren Y."/>
            <person name="Cheng J."/>
            <person name="Wang W."/>
            <person name="Wang J."/>
            <person name="Qian W."/>
            <person name="Li D."/>
            <person name="Wang L."/>
        </authorList>
    </citation>
    <scope>NUCLEOTIDE SEQUENCE [LARGE SCALE GENOMIC DNA]</scope>
    <source>
        <strain>ATCC 39541 / Classical Ogawa 395 / O395</strain>
    </source>
</reference>
<name>ZIPA_VIBC3</name>
<keyword id="KW-0131">Cell cycle</keyword>
<keyword id="KW-0132">Cell division</keyword>
<keyword id="KW-0997">Cell inner membrane</keyword>
<keyword id="KW-1003">Cell membrane</keyword>
<keyword id="KW-0472">Membrane</keyword>
<keyword id="KW-0812">Transmembrane</keyword>
<keyword id="KW-1133">Transmembrane helix</keyword>
<accession>A5F2W2</accession>
<accession>C3LYY1</accession>
<sequence>MQELRFVLIIVGALAIAALLFHGLWTSKKEGKSKFGDKPLRKMKVESDDPPSRAFAAEDDFEIIRKERKEPDFGIPNQQHDPLISDFAAHDELDEEEDEEARIPVQPQSQPQPRKVQPQVEMPRVAPNVPMAKVQPEVVTEIEVQEPQEEKLDVIVLNVHCAGNQPFIGTKLFDSMQQNGLLFGEMDIFHRHADLSGTGKVLFSVANMMQPGTLMHDDPADFSTKGISFFMTLPCFGDPEQNFKLMLKTAQQIADDLGGHVLDDARNLMTPNRLDAYRKQIQEFKVRAAQA</sequence>
<proteinExistence type="inferred from homology"/>